<reference key="1">
    <citation type="journal article" date="2011" name="J. Bacteriol.">
        <title>Comparative genomics of 28 Salmonella enterica isolates: evidence for CRISPR-mediated adaptive sublineage evolution.</title>
        <authorList>
            <person name="Fricke W.F."/>
            <person name="Mammel M.K."/>
            <person name="McDermott P.F."/>
            <person name="Tartera C."/>
            <person name="White D.G."/>
            <person name="Leclerc J.E."/>
            <person name="Ravel J."/>
            <person name="Cebula T.A."/>
        </authorList>
    </citation>
    <scope>NUCLEOTIDE SEQUENCE [LARGE SCALE GENOMIC DNA]</scope>
    <source>
        <strain>SL476</strain>
    </source>
</reference>
<name>SELU_SALHS</name>
<protein>
    <recommendedName>
        <fullName evidence="1">tRNA 2-selenouridine synthase</fullName>
        <ecNumber evidence="1">2.9.1.3</ecNumber>
    </recommendedName>
</protein>
<organism>
    <name type="scientific">Salmonella heidelberg (strain SL476)</name>
    <dbReference type="NCBI Taxonomy" id="454169"/>
    <lineage>
        <taxon>Bacteria</taxon>
        <taxon>Pseudomonadati</taxon>
        <taxon>Pseudomonadota</taxon>
        <taxon>Gammaproteobacteria</taxon>
        <taxon>Enterobacterales</taxon>
        <taxon>Enterobacteriaceae</taxon>
        <taxon>Salmonella</taxon>
    </lineage>
</organism>
<gene>
    <name evidence="1" type="primary">selU</name>
    <name type="ordered locus">SeHA_C0621</name>
</gene>
<evidence type="ECO:0000255" key="1">
    <source>
        <dbReference type="HAMAP-Rule" id="MF_01622"/>
    </source>
</evidence>
<accession>B4T9K6</accession>
<feature type="chain" id="PRO_1000186083" description="tRNA 2-selenouridine synthase">
    <location>
        <begin position="1"/>
        <end position="364"/>
    </location>
</feature>
<feature type="domain" description="Rhodanese" evidence="1">
    <location>
        <begin position="14"/>
        <end position="137"/>
    </location>
</feature>
<feature type="active site" description="S-selanylcysteine intermediate" evidence="1">
    <location>
        <position position="97"/>
    </location>
</feature>
<sequence>MQDRQKAQDYRALLLADTPLIDVRAPIEFEQGAMPGAINLPLMMDDERAAVGTCYKRQGADAALALGHRLVCGDIRQQRLEAWKAAYQRFPNGYLCCARGGQRSHIVQRWLQETGIDCPLIEGGYKALRQTAIQATWQLAQKPILLIGGCTGSGKTQLVRQQPNGVDLEGLARHRGSSFGRTLNPQLSQASFENKLAVELLKINARQTLKRWVLEDEGRTIGANHLPECLRERMAQAPIAVVEDPFALRLERLREEYFICMHHDFTHAYGDEAGWQAYSEYLHHGLFAIRRRLGLQRFAELTDTLDRALAEQLSSGSTDGHMAWLVPLLNEYYDPMYRYQLEKKAANIVFRGPWQDVANWLKAQ</sequence>
<comment type="function">
    <text evidence="1">Involved in the post-transcriptional modification of the uridine at the wobble position (U34) of tRNA(Lys), tRNA(Glu) and tRNA(Gln). Catalyzes the conversion of 2-thiouridine (S2U-RNA) to 2-selenouridine (Se2U-RNA). Acts in a two-step process involving geranylation of 2-thiouridine (S2U) to S-geranyl-2-thiouridine (geS2U) and subsequent selenation of the latter derivative to 2-selenouridine (Se2U) in the tRNA chain.</text>
</comment>
<comment type="catalytic activity">
    <reaction evidence="1">
        <text>5-methylaminomethyl-2-thiouridine(34) in tRNA + selenophosphate + (2E)-geranyl diphosphate + H2O + H(+) = 5-methylaminomethyl-2-selenouridine(34) in tRNA + (2E)-thiogeraniol + phosphate + diphosphate</text>
        <dbReference type="Rhea" id="RHEA:42716"/>
        <dbReference type="Rhea" id="RHEA-COMP:10195"/>
        <dbReference type="Rhea" id="RHEA-COMP:10196"/>
        <dbReference type="ChEBI" id="CHEBI:15377"/>
        <dbReference type="ChEBI" id="CHEBI:15378"/>
        <dbReference type="ChEBI" id="CHEBI:16144"/>
        <dbReference type="ChEBI" id="CHEBI:33019"/>
        <dbReference type="ChEBI" id="CHEBI:43474"/>
        <dbReference type="ChEBI" id="CHEBI:58057"/>
        <dbReference type="ChEBI" id="CHEBI:74455"/>
        <dbReference type="ChEBI" id="CHEBI:82743"/>
        <dbReference type="ChEBI" id="CHEBI:143703"/>
        <dbReference type="EC" id="2.9.1.3"/>
    </reaction>
    <physiologicalReaction direction="left-to-right" evidence="1">
        <dbReference type="Rhea" id="RHEA:42717"/>
    </physiologicalReaction>
</comment>
<comment type="catalytic activity">
    <reaction evidence="1">
        <text>5-methylaminomethyl-2-thiouridine(34) in tRNA + (2E)-geranyl diphosphate = 5-methylaminomethyl-S-(2E)-geranyl-thiouridine(34) in tRNA + diphosphate</text>
        <dbReference type="Rhea" id="RHEA:14085"/>
        <dbReference type="Rhea" id="RHEA-COMP:10195"/>
        <dbReference type="Rhea" id="RHEA-COMP:14654"/>
        <dbReference type="ChEBI" id="CHEBI:33019"/>
        <dbReference type="ChEBI" id="CHEBI:58057"/>
        <dbReference type="ChEBI" id="CHEBI:74455"/>
        <dbReference type="ChEBI" id="CHEBI:140632"/>
    </reaction>
    <physiologicalReaction direction="left-to-right" evidence="1">
        <dbReference type="Rhea" id="RHEA:14086"/>
    </physiologicalReaction>
</comment>
<comment type="catalytic activity">
    <reaction evidence="1">
        <text>5-methylaminomethyl-S-(2E)-geranyl-thiouridine(34) in tRNA + selenophosphate + H(+) = 5-methylaminomethyl-2-(Se-phospho)selenouridine(34) in tRNA + (2E)-thiogeraniol</text>
        <dbReference type="Rhea" id="RHEA:60172"/>
        <dbReference type="Rhea" id="RHEA-COMP:14654"/>
        <dbReference type="Rhea" id="RHEA-COMP:15523"/>
        <dbReference type="ChEBI" id="CHEBI:15378"/>
        <dbReference type="ChEBI" id="CHEBI:16144"/>
        <dbReference type="ChEBI" id="CHEBI:140632"/>
        <dbReference type="ChEBI" id="CHEBI:143702"/>
        <dbReference type="ChEBI" id="CHEBI:143703"/>
    </reaction>
    <physiologicalReaction direction="left-to-right" evidence="1">
        <dbReference type="Rhea" id="RHEA:60173"/>
    </physiologicalReaction>
</comment>
<comment type="catalytic activity">
    <reaction evidence="1">
        <text>5-methylaminomethyl-2-(Se-phospho)selenouridine(34) in tRNA + H2O = 5-methylaminomethyl-2-selenouridine(34) in tRNA + phosphate</text>
        <dbReference type="Rhea" id="RHEA:60176"/>
        <dbReference type="Rhea" id="RHEA-COMP:10196"/>
        <dbReference type="Rhea" id="RHEA-COMP:15523"/>
        <dbReference type="ChEBI" id="CHEBI:15377"/>
        <dbReference type="ChEBI" id="CHEBI:43474"/>
        <dbReference type="ChEBI" id="CHEBI:82743"/>
        <dbReference type="ChEBI" id="CHEBI:143702"/>
    </reaction>
    <physiologicalReaction direction="left-to-right" evidence="1">
        <dbReference type="Rhea" id="RHEA:60177"/>
    </physiologicalReaction>
</comment>
<comment type="subunit">
    <text evidence="1">Monomer.</text>
</comment>
<comment type="similarity">
    <text evidence="1">Belongs to the SelU family.</text>
</comment>
<proteinExistence type="inferred from homology"/>
<keyword id="KW-0711">Selenium</keyword>
<keyword id="KW-0808">Transferase</keyword>
<dbReference type="EC" id="2.9.1.3" evidence="1"/>
<dbReference type="EMBL" id="CP001120">
    <property type="protein sequence ID" value="ACF70373.1"/>
    <property type="molecule type" value="Genomic_DNA"/>
</dbReference>
<dbReference type="SMR" id="B4T9K6"/>
<dbReference type="KEGG" id="seh:SeHA_C0621"/>
<dbReference type="HOGENOM" id="CLU_043456_1_0_6"/>
<dbReference type="Proteomes" id="UP000001866">
    <property type="component" value="Chromosome"/>
</dbReference>
<dbReference type="GO" id="GO:0016765">
    <property type="term" value="F:transferase activity, transferring alkyl or aryl (other than methyl) groups"/>
    <property type="evidence" value="ECO:0007669"/>
    <property type="project" value="UniProtKB-UniRule"/>
</dbReference>
<dbReference type="GO" id="GO:0043828">
    <property type="term" value="F:tRNA 2-selenouridine synthase activity"/>
    <property type="evidence" value="ECO:0007669"/>
    <property type="project" value="UniProtKB-EC"/>
</dbReference>
<dbReference type="GO" id="GO:0002098">
    <property type="term" value="P:tRNA wobble uridine modification"/>
    <property type="evidence" value="ECO:0007669"/>
    <property type="project" value="UniProtKB-UniRule"/>
</dbReference>
<dbReference type="CDD" id="cd01520">
    <property type="entry name" value="RHOD_YbbB"/>
    <property type="match status" value="1"/>
</dbReference>
<dbReference type="FunFam" id="3.40.250.10:FF:000009">
    <property type="entry name" value="tRNA 2-selenouridine/geranyl-2-thiouridine synthase"/>
    <property type="match status" value="1"/>
</dbReference>
<dbReference type="Gene3D" id="3.40.250.10">
    <property type="entry name" value="Rhodanese-like domain"/>
    <property type="match status" value="1"/>
</dbReference>
<dbReference type="HAMAP" id="MF_01622">
    <property type="entry name" value="tRNA_sel_U_synth"/>
    <property type="match status" value="1"/>
</dbReference>
<dbReference type="InterPro" id="IPR001763">
    <property type="entry name" value="Rhodanese-like_dom"/>
</dbReference>
<dbReference type="InterPro" id="IPR036873">
    <property type="entry name" value="Rhodanese-like_dom_sf"/>
</dbReference>
<dbReference type="InterPro" id="IPR017582">
    <property type="entry name" value="SelU"/>
</dbReference>
<dbReference type="NCBIfam" id="NF008749">
    <property type="entry name" value="PRK11784.1-1"/>
    <property type="match status" value="1"/>
</dbReference>
<dbReference type="NCBIfam" id="NF008751">
    <property type="entry name" value="PRK11784.1-3"/>
    <property type="match status" value="1"/>
</dbReference>
<dbReference type="NCBIfam" id="TIGR03167">
    <property type="entry name" value="tRNA_sel_U_synt"/>
    <property type="match status" value="1"/>
</dbReference>
<dbReference type="PANTHER" id="PTHR30401">
    <property type="entry name" value="TRNA 2-SELENOURIDINE SYNTHASE"/>
    <property type="match status" value="1"/>
</dbReference>
<dbReference type="PANTHER" id="PTHR30401:SF0">
    <property type="entry name" value="TRNA 2-SELENOURIDINE SYNTHASE"/>
    <property type="match status" value="1"/>
</dbReference>
<dbReference type="Pfam" id="PF00581">
    <property type="entry name" value="Rhodanese"/>
    <property type="match status" value="1"/>
</dbReference>
<dbReference type="SMART" id="SM00450">
    <property type="entry name" value="RHOD"/>
    <property type="match status" value="1"/>
</dbReference>
<dbReference type="SUPFAM" id="SSF52821">
    <property type="entry name" value="Rhodanese/Cell cycle control phosphatase"/>
    <property type="match status" value="1"/>
</dbReference>
<dbReference type="PROSITE" id="PS50206">
    <property type="entry name" value="RHODANESE_3"/>
    <property type="match status" value="1"/>
</dbReference>